<proteinExistence type="evidence at transcript level"/>
<protein>
    <recommendedName>
        <fullName evidence="9">ABC transporter G family member 26</fullName>
        <shortName evidence="9">ABC transporter ABCG.26</shortName>
        <shortName evidence="9">AtABCG26</shortName>
    </recommendedName>
    <alternativeName>
        <fullName evidence="8">Putative white-brown complex homolog protein 27</fullName>
        <shortName evidence="8">AtWBC27</shortName>
    </alternativeName>
</protein>
<gene>
    <name evidence="9" type="primary">ABCG26</name>
    <name evidence="8" type="synonym">WBC27</name>
    <name evidence="12" type="ordered locus">At3g13220</name>
    <name evidence="13" type="ORF">MJG19.19</name>
</gene>
<dbReference type="EMBL" id="AP000375">
    <property type="protein sequence ID" value="BAB01414.1"/>
    <property type="status" value="ALT_SEQ"/>
    <property type="molecule type" value="Genomic_DNA"/>
</dbReference>
<dbReference type="EMBL" id="CP002686">
    <property type="protein sequence ID" value="AEE75312.1"/>
    <property type="molecule type" value="Genomic_DNA"/>
</dbReference>
<dbReference type="RefSeq" id="NP_187928.2">
    <property type="nucleotide sequence ID" value="NM_112162.3"/>
</dbReference>
<dbReference type="SMR" id="Q9LK50"/>
<dbReference type="BioGRID" id="5846">
    <property type="interactions" value="6"/>
</dbReference>
<dbReference type="FunCoup" id="Q9LK50">
    <property type="interactions" value="270"/>
</dbReference>
<dbReference type="IntAct" id="Q9LK50">
    <property type="interactions" value="3"/>
</dbReference>
<dbReference type="STRING" id="3702.Q9LK50"/>
<dbReference type="PaxDb" id="3702-AT3G13220.1"/>
<dbReference type="EnsemblPlants" id="AT3G13220.1">
    <property type="protein sequence ID" value="AT3G13220.1"/>
    <property type="gene ID" value="AT3G13220"/>
</dbReference>
<dbReference type="GeneID" id="820512"/>
<dbReference type="Gramene" id="AT3G13220.1">
    <property type="protein sequence ID" value="AT3G13220.1"/>
    <property type="gene ID" value="AT3G13220"/>
</dbReference>
<dbReference type="KEGG" id="ath:AT3G13220"/>
<dbReference type="Araport" id="AT3G13220"/>
<dbReference type="TAIR" id="AT3G13220">
    <property type="gene designation" value="ABCG26"/>
</dbReference>
<dbReference type="eggNOG" id="KOG0061">
    <property type="taxonomic scope" value="Eukaryota"/>
</dbReference>
<dbReference type="HOGENOM" id="CLU_000604_57_10_1"/>
<dbReference type="InParanoid" id="Q9LK50"/>
<dbReference type="OMA" id="NMQIVEF"/>
<dbReference type="PRO" id="PR:Q9LK50"/>
<dbReference type="Proteomes" id="UP000006548">
    <property type="component" value="Chromosome 3"/>
</dbReference>
<dbReference type="ExpressionAtlas" id="Q9LK50">
    <property type="expression patterns" value="baseline and differential"/>
</dbReference>
<dbReference type="GO" id="GO:0005789">
    <property type="term" value="C:endoplasmic reticulum membrane"/>
    <property type="evidence" value="ECO:0000314"/>
    <property type="project" value="UniProtKB"/>
</dbReference>
<dbReference type="GO" id="GO:0005886">
    <property type="term" value="C:plasma membrane"/>
    <property type="evidence" value="ECO:0000314"/>
    <property type="project" value="UniProtKB"/>
</dbReference>
<dbReference type="GO" id="GO:0140359">
    <property type="term" value="F:ABC-type transporter activity"/>
    <property type="evidence" value="ECO:0007669"/>
    <property type="project" value="InterPro"/>
</dbReference>
<dbReference type="GO" id="GO:0005524">
    <property type="term" value="F:ATP binding"/>
    <property type="evidence" value="ECO:0007669"/>
    <property type="project" value="UniProtKB-KW"/>
</dbReference>
<dbReference type="GO" id="GO:0016887">
    <property type="term" value="F:ATP hydrolysis activity"/>
    <property type="evidence" value="ECO:0007669"/>
    <property type="project" value="InterPro"/>
</dbReference>
<dbReference type="GO" id="GO:0042626">
    <property type="term" value="F:ATPase-coupled transmembrane transporter activity"/>
    <property type="evidence" value="ECO:0000315"/>
    <property type="project" value="UniProtKB"/>
</dbReference>
<dbReference type="GO" id="GO:0009555">
    <property type="term" value="P:pollen development"/>
    <property type="evidence" value="ECO:0000315"/>
    <property type="project" value="UniProtKB"/>
</dbReference>
<dbReference type="GO" id="GO:0010584">
    <property type="term" value="P:pollen exine formation"/>
    <property type="evidence" value="ECO:0000315"/>
    <property type="project" value="UniProtKB"/>
</dbReference>
<dbReference type="GO" id="GO:0010152">
    <property type="term" value="P:pollen maturation"/>
    <property type="evidence" value="ECO:0000315"/>
    <property type="project" value="TAIR"/>
</dbReference>
<dbReference type="GO" id="GO:0030638">
    <property type="term" value="P:polyketide metabolic process"/>
    <property type="evidence" value="ECO:0000315"/>
    <property type="project" value="UniProtKB"/>
</dbReference>
<dbReference type="GO" id="GO:0080110">
    <property type="term" value="P:sporopollenin biosynthetic process"/>
    <property type="evidence" value="ECO:0000315"/>
    <property type="project" value="UniProtKB"/>
</dbReference>
<dbReference type="GO" id="GO:0055085">
    <property type="term" value="P:transmembrane transport"/>
    <property type="evidence" value="ECO:0000315"/>
    <property type="project" value="UniProtKB"/>
</dbReference>
<dbReference type="CDD" id="cd03213">
    <property type="entry name" value="ABCG_EPDR"/>
    <property type="match status" value="1"/>
</dbReference>
<dbReference type="FunFam" id="3.40.50.300:FF:000337">
    <property type="entry name" value="ABC transporter G family member 22"/>
    <property type="match status" value="1"/>
</dbReference>
<dbReference type="Gene3D" id="3.40.50.300">
    <property type="entry name" value="P-loop containing nucleotide triphosphate hydrolases"/>
    <property type="match status" value="1"/>
</dbReference>
<dbReference type="InterPro" id="IPR003593">
    <property type="entry name" value="AAA+_ATPase"/>
</dbReference>
<dbReference type="InterPro" id="IPR013525">
    <property type="entry name" value="ABC2_TM"/>
</dbReference>
<dbReference type="InterPro" id="IPR003439">
    <property type="entry name" value="ABC_transporter-like_ATP-bd"/>
</dbReference>
<dbReference type="InterPro" id="IPR043926">
    <property type="entry name" value="ABCG_dom"/>
</dbReference>
<dbReference type="InterPro" id="IPR050352">
    <property type="entry name" value="ABCG_transporters"/>
</dbReference>
<dbReference type="InterPro" id="IPR027417">
    <property type="entry name" value="P-loop_NTPase"/>
</dbReference>
<dbReference type="PANTHER" id="PTHR48041:SF135">
    <property type="entry name" value="ABC TRANSPORTER G FAMILY MEMBER 26"/>
    <property type="match status" value="1"/>
</dbReference>
<dbReference type="PANTHER" id="PTHR48041">
    <property type="entry name" value="ABC TRANSPORTER G FAMILY MEMBER 28"/>
    <property type="match status" value="1"/>
</dbReference>
<dbReference type="Pfam" id="PF01061">
    <property type="entry name" value="ABC2_membrane"/>
    <property type="match status" value="1"/>
</dbReference>
<dbReference type="Pfam" id="PF19055">
    <property type="entry name" value="ABC2_membrane_7"/>
    <property type="match status" value="1"/>
</dbReference>
<dbReference type="Pfam" id="PF00005">
    <property type="entry name" value="ABC_tran"/>
    <property type="match status" value="1"/>
</dbReference>
<dbReference type="SMART" id="SM00382">
    <property type="entry name" value="AAA"/>
    <property type="match status" value="1"/>
</dbReference>
<dbReference type="SUPFAM" id="SSF52540">
    <property type="entry name" value="P-loop containing nucleoside triphosphate hydrolases"/>
    <property type="match status" value="1"/>
</dbReference>
<dbReference type="PROSITE" id="PS50893">
    <property type="entry name" value="ABC_TRANSPORTER_2"/>
    <property type="match status" value="1"/>
</dbReference>
<feature type="chain" id="PRO_0000240698" description="ABC transporter G family member 26">
    <location>
        <begin position="1"/>
        <end position="685"/>
    </location>
</feature>
<feature type="transmembrane region" description="Helical" evidence="1">
    <location>
        <begin position="432"/>
        <end position="452"/>
    </location>
</feature>
<feature type="transmembrane region" description="Helical" evidence="1">
    <location>
        <begin position="468"/>
        <end position="488"/>
    </location>
</feature>
<feature type="transmembrane region" description="Helical" evidence="1">
    <location>
        <begin position="518"/>
        <end position="538"/>
    </location>
</feature>
<feature type="transmembrane region" description="Helical" evidence="1">
    <location>
        <begin position="542"/>
        <end position="562"/>
    </location>
</feature>
<feature type="transmembrane region" description="Helical" evidence="1">
    <location>
        <begin position="576"/>
        <end position="596"/>
    </location>
</feature>
<feature type="transmembrane region" description="Helical" evidence="1">
    <location>
        <begin position="648"/>
        <end position="668"/>
    </location>
</feature>
<feature type="domain" description="ABC transporter" evidence="2">
    <location>
        <begin position="65"/>
        <end position="329"/>
    </location>
</feature>
<feature type="domain" description="ABC transmembrane type-2" evidence="1">
    <location>
        <begin position="414"/>
        <end position="623"/>
    </location>
</feature>
<feature type="binding site" evidence="2">
    <location>
        <begin position="124"/>
        <end position="131"/>
    </location>
    <ligand>
        <name>ATP</name>
        <dbReference type="ChEBI" id="CHEBI:30616"/>
    </ligand>
</feature>
<evidence type="ECO:0000255" key="1"/>
<evidence type="ECO:0000255" key="2">
    <source>
        <dbReference type="PROSITE-ProRule" id="PRU00434"/>
    </source>
</evidence>
<evidence type="ECO:0000269" key="3">
    <source>
    </source>
</evidence>
<evidence type="ECO:0000269" key="4">
    <source>
    </source>
</evidence>
<evidence type="ECO:0000269" key="5">
    <source>
    </source>
</evidence>
<evidence type="ECO:0000269" key="6">
    <source>
    </source>
</evidence>
<evidence type="ECO:0000269" key="7">
    <source>
    </source>
</evidence>
<evidence type="ECO:0000303" key="8">
    <source>
    </source>
</evidence>
<evidence type="ECO:0000303" key="9">
    <source>
    </source>
</evidence>
<evidence type="ECO:0000305" key="10"/>
<evidence type="ECO:0000305" key="11">
    <source>
    </source>
</evidence>
<evidence type="ECO:0000312" key="12">
    <source>
        <dbReference type="Araport" id="AT3G13220"/>
    </source>
</evidence>
<evidence type="ECO:0000312" key="13">
    <source>
        <dbReference type="EMBL" id="BAB01414.1"/>
    </source>
</evidence>
<reference key="1">
    <citation type="journal article" date="2000" name="DNA Res.">
        <title>Structural analysis of Arabidopsis thaliana chromosome 3. II. Sequence features of the 4,251,695 bp regions covered by 90 P1, TAC and BAC clones.</title>
        <authorList>
            <person name="Kaneko T."/>
            <person name="Katoh T."/>
            <person name="Sato S."/>
            <person name="Nakamura Y."/>
            <person name="Asamizu E."/>
            <person name="Tabata S."/>
        </authorList>
    </citation>
    <scope>NUCLEOTIDE SEQUENCE [LARGE SCALE GENOMIC DNA]</scope>
    <source>
        <strain>cv. Columbia</strain>
    </source>
</reference>
<reference key="2">
    <citation type="journal article" date="2017" name="Plant J.">
        <title>Araport11: a complete reannotation of the Arabidopsis thaliana reference genome.</title>
        <authorList>
            <person name="Cheng C.Y."/>
            <person name="Krishnakumar V."/>
            <person name="Chan A.P."/>
            <person name="Thibaud-Nissen F."/>
            <person name="Schobel S."/>
            <person name="Town C.D."/>
        </authorList>
    </citation>
    <scope>GENOME REANNOTATION</scope>
    <source>
        <strain>cv. Columbia</strain>
    </source>
</reference>
<reference key="3">
    <citation type="journal article" date="2001" name="J. Biol. Chem.">
        <title>The Arabidopsis thaliana ABC protein superfamily, a complete inventory.</title>
        <authorList>
            <person name="Sanchez-Fernandez R."/>
            <person name="Davies T.G."/>
            <person name="Coleman J.O."/>
            <person name="Rea P.A."/>
        </authorList>
    </citation>
    <scope>GENE FAMILY</scope>
    <scope>NOMENCLATURE</scope>
</reference>
<reference key="4">
    <citation type="journal article" date="2008" name="Trends Plant Sci.">
        <title>Plant ABC proteins - a unified nomenclature and updated inventory.</title>
        <authorList>
            <person name="Verrier P.J."/>
            <person name="Bird D."/>
            <person name="Burla B."/>
            <person name="Dassa E."/>
            <person name="Forestier C."/>
            <person name="Geisler M."/>
            <person name="Klein M."/>
            <person name="Kolukisaoglu H.U."/>
            <person name="Lee Y."/>
            <person name="Martinoia E."/>
            <person name="Murphy A."/>
            <person name="Rea P.A."/>
            <person name="Samuels L."/>
            <person name="Schulz B."/>
            <person name="Spalding E.J."/>
            <person name="Yazaki K."/>
            <person name="Theodoulou F.L."/>
        </authorList>
    </citation>
    <scope>GENE FAMILY</scope>
    <scope>NOMENCLATURE</scope>
</reference>
<reference key="5">
    <citation type="journal article" date="2010" name="Plant Physiol.">
        <title>ATP-binding cassette transporter G26 is required for male fertility and pollen exine formation in Arabidopsis.</title>
        <authorList>
            <person name="Quilichini T.D."/>
            <person name="Friedmann M.C."/>
            <person name="Samuels A.L."/>
            <person name="Douglas C.J."/>
        </authorList>
    </citation>
    <scope>FUNCTION</scope>
    <scope>DISRUPTION PHENOTYPE</scope>
    <scope>TISSUE SPECIFICITY</scope>
    <scope>DEVELOPMENTAL STAGE</scope>
    <scope>SUBCELLULAR LOCATION</scope>
    <source>
        <strain>cv. Columbia</strain>
    </source>
</reference>
<reference key="6">
    <citation type="journal article" date="2011" name="J. Integr. Plant Biol.">
        <title>WBC27, an adenosine tri-phosphate-binding cassette protein, controls pollen wall formation and patterning in Arabidopsis.</title>
        <authorList>
            <person name="Dou X.-Y."/>
            <person name="Yang K.-Z."/>
            <person name="Zhang Y."/>
            <person name="Wang W."/>
            <person name="Liu X.-L."/>
            <person name="Chen L.-Q."/>
            <person name="Zhang X.-Q."/>
            <person name="Ye D."/>
        </authorList>
    </citation>
    <scope>FUNCTION</scope>
    <scope>DISRUPTION PHENOTYPE</scope>
    <scope>TISSUE SPECIFICITY</scope>
    <scope>DEVELOPMENTAL STAGE</scope>
    <scope>SUBCELLULAR LOCATION</scope>
    <source>
        <strain>cv. Columbia</strain>
    </source>
</reference>
<reference key="7">
    <citation type="journal article" date="2011" name="J. Plant Physiol.">
        <title>Arabidopsis mutant of AtABCG26, an ABC transporter gene, is defective in pollen maturation.</title>
        <authorList>
            <person name="Kuromori T."/>
            <person name="Ito T."/>
            <person name="Sugimoto E."/>
            <person name="Shinozaki K."/>
        </authorList>
    </citation>
    <scope>FUNCTION</scope>
    <scope>DEVELOPMENTAL STAGE</scope>
</reference>
<reference key="8">
    <citation type="journal article" date="2011" name="Plant J.">
        <title>An ABCG/WBC-type ABC transporter is essential for transport of sporopollenin precursors for exine formation in developing pollen.</title>
        <authorList>
            <person name="Choi H."/>
            <person name="Jin J.-Y."/>
            <person name="Choi S."/>
            <person name="Hwang J.-U."/>
            <person name="Kim Y.-Y."/>
            <person name="Suh M.C."/>
            <person name="Lee Y."/>
        </authorList>
    </citation>
    <scope>FUNCTION</scope>
    <scope>DISRUPTION PHENOTYPE</scope>
    <scope>TISSUE SPECIFICITY</scope>
    <scope>DEVELOPMENTAL STAGE</scope>
    <scope>SUBCELLULAR LOCATION</scope>
    <source>
        <strain>cv. Columbia</strain>
    </source>
</reference>
<reference key="9">
    <citation type="journal article" date="2014" name="Plant Cell">
        <title>ABCG26-mediated polyketide trafficking and hydroxycinnamoyl spermidines contribute to pollen wall exine formation in Arabidopsis.</title>
        <authorList>
            <person name="Quilichini T.D."/>
            <person name="Samuels A.L."/>
            <person name="Douglas C.J."/>
        </authorList>
    </citation>
    <scope>FUNCTION</scope>
    <scope>DISRUPTION PHENOTYPE</scope>
    <source>
        <strain>cv. Columbia</strain>
    </source>
</reference>
<accession>Q9LK50</accession>
<accession>F4JC75</accession>
<name>AB26G_ARATH</name>
<organism>
    <name type="scientific">Arabidopsis thaliana</name>
    <name type="common">Mouse-ear cress</name>
    <dbReference type="NCBI Taxonomy" id="3702"/>
    <lineage>
        <taxon>Eukaryota</taxon>
        <taxon>Viridiplantae</taxon>
        <taxon>Streptophyta</taxon>
        <taxon>Embryophyta</taxon>
        <taxon>Tracheophyta</taxon>
        <taxon>Spermatophyta</taxon>
        <taxon>Magnoliopsida</taxon>
        <taxon>eudicotyledons</taxon>
        <taxon>Gunneridae</taxon>
        <taxon>Pentapetalae</taxon>
        <taxon>rosids</taxon>
        <taxon>malvids</taxon>
        <taxon>Brassicales</taxon>
        <taxon>Brassicaceae</taxon>
        <taxon>Camelineae</taxon>
        <taxon>Arabidopsis</taxon>
    </lineage>
</organism>
<keyword id="KW-0067">ATP-binding</keyword>
<keyword id="KW-1003">Cell membrane</keyword>
<keyword id="KW-0256">Endoplasmic reticulum</keyword>
<keyword id="KW-0472">Membrane</keyword>
<keyword id="KW-0547">Nucleotide-binding</keyword>
<keyword id="KW-1185">Reference proteome</keyword>
<keyword id="KW-0812">Transmembrane</keyword>
<keyword id="KW-1133">Transmembrane helix</keyword>
<keyword id="KW-0813">Transport</keyword>
<comment type="function">
    <text evidence="3 4 5 6 7">Mediates the transport of sporopollenin precursors (e.g. polyketides) across the tapetum plasma membrane into the anther locule for polymerization on developing microspore walls, thus being required for male fertility and pollen exine formation and patterning prior to tapetum programmed cell death.</text>
</comment>
<comment type="subunit">
    <text evidence="11">Homo- or heterodimer.</text>
</comment>
<comment type="subcellular location">
    <subcellularLocation>
        <location evidence="3 4 5">Cell membrane</location>
        <topology evidence="1">Multi-pass membrane protein</topology>
    </subcellularLocation>
    <subcellularLocation>
        <location evidence="3">Endoplasmic reticulum membrane</location>
        <topology evidence="1">Multi-pass membrane protein</topology>
    </subcellularLocation>
</comment>
<comment type="tissue specificity">
    <text evidence="3 4 5">Mostly expressed in flowers, especially in tapetum within anthers.</text>
</comment>
<comment type="developmental stage">
    <text evidence="3 4 5">In developing anthers, transiently localized to tapetum cells during early pollen wall formation, sporopollenin biosynthesis and sporopollenin deposition.</text>
</comment>
<comment type="disruption phenotype">
    <text evidence="3 4 5 6 7">Drastic decrease in seed production (PubMed:20732973, PubMed:21205178, PubMed:21223384, PubMed:21696844). Severely reduced fertility, with most siliques failing to produce seeds by self-fertilization and mature anthers failing to release pollen grains characterized by the absence of an exine wall on microspores, due to an impaired sporopollenin deposition (PubMed:20732973, PubMed:21205178, PubMed:21223384, PubMed:21696844, PubMed:25415974). Aberrant structures in tapetal cells such as accumulation of numerous vesicles and granules probably containing polyketides precursors in tapetal cells (PubMed:21223384, PubMed:25415974). Abnormal pollen grains germinating in the anther before anthesis (PubMed:21205178).</text>
</comment>
<comment type="similarity">
    <text evidence="10">Belongs to the ABC transporter superfamily. ABCG family. Eye pigment precursor importer (TC 3.A.1.204) subfamily.</text>
</comment>
<comment type="sequence caution" evidence="10">
    <conflict type="erroneous gene model prediction">
        <sequence resource="EMBL-CDS" id="BAB01414"/>
    </conflict>
</comment>
<sequence>MEIRRSTEEVEENHVMQITGSNGIVHNMEFMPQAYLRNQYSSEIDIDEEFVSTYPLEDAPLPIFLKFEDVEYKVRNSHASSANLVKTMVSKVVTHTNPDPDGYKHILKGITGSTGPGEILALMGPSGSGKTTLLKIMGGRLTDNVKGKLTYNDIPYSPSVKRRIGFVTQDDVLLPQLTVEETLAFAAFLRLPSSMSKEQKYAKIEMIIKELGLERCRRTRVGGGFVKGISGGERKRASIAYEILVDPSLLLLDEPTSGLDSTSATKLLHILQGVAKAGRTVITTIHQPSSRMFHMFDKLLLISEGHPAFYGKARESMEYFSSLRILPEIAMNPAEFLLDLATGQVSDISLPDELLAAKTAQPDSEEVLLKYLKQRYKTDLEPKEKEENHRNRKAPEHLQIAIQVKKDWTLSWWDQFLILSRRTFRERRRDYFDKLRLVQSLGVAVVLGLLWWKSKTDTEAHLRDQVGLMFYICIFWTSSSLFGAVYVFPFEKIYLVKERKAEMYRLSVYYVCSTLCDMVAHVLYPTFFMIIVYFMAEFNRNIPCFLFTVLTILLIAITSQGAGEFLGASVLSIKRAGMIASLVLMLFLLTGGYYVQHIPKFMQWLKYLSFMHYGFRLLLKVQYSADQLFECGSKGGCRTLQSSSSFDTINLNGGLQELWVLLAMAFGYRLCAYFCLRKKISICHL</sequence>